<accession>O05493</accession>
<accession>Q797E9</accession>
<proteinExistence type="inferred from homology"/>
<keyword id="KW-1003">Cell membrane</keyword>
<keyword id="KW-0472">Membrane</keyword>
<keyword id="KW-1185">Reference proteome</keyword>
<keyword id="KW-0812">Transmembrane</keyword>
<keyword id="KW-1133">Transmembrane helix</keyword>
<keyword id="KW-0813">Transport</keyword>
<protein>
    <recommendedName>
        <fullName>Probable membrane transporter protein YdhB</fullName>
    </recommendedName>
</protein>
<gene>
    <name type="primary">ydhB</name>
    <name type="ordered locus">BSU05690</name>
</gene>
<dbReference type="EMBL" id="D88802">
    <property type="protein sequence ID" value="BAA19693.1"/>
    <property type="status" value="ALT_FRAME"/>
    <property type="molecule type" value="Genomic_DNA"/>
</dbReference>
<dbReference type="EMBL" id="AL009126">
    <property type="protein sequence ID" value="CAB12388.2"/>
    <property type="molecule type" value="Genomic_DNA"/>
</dbReference>
<dbReference type="PIR" id="F69783">
    <property type="entry name" value="F69783"/>
</dbReference>
<dbReference type="RefSeq" id="NP_388450.2">
    <property type="nucleotide sequence ID" value="NC_000964.3"/>
</dbReference>
<dbReference type="RefSeq" id="WP_003234130.1">
    <property type="nucleotide sequence ID" value="NZ_OZ025638.1"/>
</dbReference>
<dbReference type="FunCoup" id="O05493">
    <property type="interactions" value="114"/>
</dbReference>
<dbReference type="STRING" id="224308.BSU05690"/>
<dbReference type="PaxDb" id="224308-BSU05690"/>
<dbReference type="EnsemblBacteria" id="CAB12388">
    <property type="protein sequence ID" value="CAB12388"/>
    <property type="gene ID" value="BSU_05690"/>
</dbReference>
<dbReference type="GeneID" id="939893"/>
<dbReference type="KEGG" id="bsu:BSU05690"/>
<dbReference type="PATRIC" id="fig|224308.179.peg.612"/>
<dbReference type="eggNOG" id="COG0730">
    <property type="taxonomic scope" value="Bacteria"/>
</dbReference>
<dbReference type="InParanoid" id="O05493"/>
<dbReference type="OrthoDB" id="5457526at2"/>
<dbReference type="PhylomeDB" id="O05493"/>
<dbReference type="BioCyc" id="BSUB:BSU05690-MONOMER"/>
<dbReference type="Proteomes" id="UP000001570">
    <property type="component" value="Chromosome"/>
</dbReference>
<dbReference type="GO" id="GO:0005886">
    <property type="term" value="C:plasma membrane"/>
    <property type="evidence" value="ECO:0007669"/>
    <property type="project" value="UniProtKB-SubCell"/>
</dbReference>
<dbReference type="InterPro" id="IPR002781">
    <property type="entry name" value="TM_pro_TauE-like"/>
</dbReference>
<dbReference type="InterPro" id="IPR051598">
    <property type="entry name" value="TSUP/Inactive_protease-like"/>
</dbReference>
<dbReference type="PANTHER" id="PTHR43701">
    <property type="entry name" value="MEMBRANE TRANSPORTER PROTEIN MJ0441-RELATED"/>
    <property type="match status" value="1"/>
</dbReference>
<dbReference type="PANTHER" id="PTHR43701:SF2">
    <property type="entry name" value="MEMBRANE TRANSPORTER PROTEIN YJNA-RELATED"/>
    <property type="match status" value="1"/>
</dbReference>
<dbReference type="Pfam" id="PF01925">
    <property type="entry name" value="TauE"/>
    <property type="match status" value="1"/>
</dbReference>
<reference key="1">
    <citation type="journal article" date="1997" name="Microbiology">
        <title>Nucleotide sequence and analysis of the phoB-rrnE-groESL region of the Bacillus subtilis chromosome.</title>
        <authorList>
            <person name="Sadaie Y."/>
            <person name="Yata K."/>
            <person name="Fujita M."/>
            <person name="Sagai H."/>
            <person name="Itaya M."/>
            <person name="Kasahara Y."/>
            <person name="Ogasawara N."/>
        </authorList>
    </citation>
    <scope>NUCLEOTIDE SEQUENCE [GENOMIC DNA]</scope>
    <source>
        <strain>168</strain>
    </source>
</reference>
<reference key="2">
    <citation type="journal article" date="1997" name="Nature">
        <title>The complete genome sequence of the Gram-positive bacterium Bacillus subtilis.</title>
        <authorList>
            <person name="Kunst F."/>
            <person name="Ogasawara N."/>
            <person name="Moszer I."/>
            <person name="Albertini A.M."/>
            <person name="Alloni G."/>
            <person name="Azevedo V."/>
            <person name="Bertero M.G."/>
            <person name="Bessieres P."/>
            <person name="Bolotin A."/>
            <person name="Borchert S."/>
            <person name="Borriss R."/>
            <person name="Boursier L."/>
            <person name="Brans A."/>
            <person name="Braun M."/>
            <person name="Brignell S.C."/>
            <person name="Bron S."/>
            <person name="Brouillet S."/>
            <person name="Bruschi C.V."/>
            <person name="Caldwell B."/>
            <person name="Capuano V."/>
            <person name="Carter N.M."/>
            <person name="Choi S.-K."/>
            <person name="Codani J.-J."/>
            <person name="Connerton I.F."/>
            <person name="Cummings N.J."/>
            <person name="Daniel R.A."/>
            <person name="Denizot F."/>
            <person name="Devine K.M."/>
            <person name="Duesterhoeft A."/>
            <person name="Ehrlich S.D."/>
            <person name="Emmerson P.T."/>
            <person name="Entian K.-D."/>
            <person name="Errington J."/>
            <person name="Fabret C."/>
            <person name="Ferrari E."/>
            <person name="Foulger D."/>
            <person name="Fritz C."/>
            <person name="Fujita M."/>
            <person name="Fujita Y."/>
            <person name="Fuma S."/>
            <person name="Galizzi A."/>
            <person name="Galleron N."/>
            <person name="Ghim S.-Y."/>
            <person name="Glaser P."/>
            <person name="Goffeau A."/>
            <person name="Golightly E.J."/>
            <person name="Grandi G."/>
            <person name="Guiseppi G."/>
            <person name="Guy B.J."/>
            <person name="Haga K."/>
            <person name="Haiech J."/>
            <person name="Harwood C.R."/>
            <person name="Henaut A."/>
            <person name="Hilbert H."/>
            <person name="Holsappel S."/>
            <person name="Hosono S."/>
            <person name="Hullo M.-F."/>
            <person name="Itaya M."/>
            <person name="Jones L.-M."/>
            <person name="Joris B."/>
            <person name="Karamata D."/>
            <person name="Kasahara Y."/>
            <person name="Klaerr-Blanchard M."/>
            <person name="Klein C."/>
            <person name="Kobayashi Y."/>
            <person name="Koetter P."/>
            <person name="Koningstein G."/>
            <person name="Krogh S."/>
            <person name="Kumano M."/>
            <person name="Kurita K."/>
            <person name="Lapidus A."/>
            <person name="Lardinois S."/>
            <person name="Lauber J."/>
            <person name="Lazarevic V."/>
            <person name="Lee S.-M."/>
            <person name="Levine A."/>
            <person name="Liu H."/>
            <person name="Masuda S."/>
            <person name="Mauel C."/>
            <person name="Medigue C."/>
            <person name="Medina N."/>
            <person name="Mellado R.P."/>
            <person name="Mizuno M."/>
            <person name="Moestl D."/>
            <person name="Nakai S."/>
            <person name="Noback M."/>
            <person name="Noone D."/>
            <person name="O'Reilly M."/>
            <person name="Ogawa K."/>
            <person name="Ogiwara A."/>
            <person name="Oudega B."/>
            <person name="Park S.-H."/>
            <person name="Parro V."/>
            <person name="Pohl T.M."/>
            <person name="Portetelle D."/>
            <person name="Porwollik S."/>
            <person name="Prescott A.M."/>
            <person name="Presecan E."/>
            <person name="Pujic P."/>
            <person name="Purnelle B."/>
            <person name="Rapoport G."/>
            <person name="Rey M."/>
            <person name="Reynolds S."/>
            <person name="Rieger M."/>
            <person name="Rivolta C."/>
            <person name="Rocha E."/>
            <person name="Roche B."/>
            <person name="Rose M."/>
            <person name="Sadaie Y."/>
            <person name="Sato T."/>
            <person name="Scanlan E."/>
            <person name="Schleich S."/>
            <person name="Schroeter R."/>
            <person name="Scoffone F."/>
            <person name="Sekiguchi J."/>
            <person name="Sekowska A."/>
            <person name="Seror S.J."/>
            <person name="Serror P."/>
            <person name="Shin B.-S."/>
            <person name="Soldo B."/>
            <person name="Sorokin A."/>
            <person name="Tacconi E."/>
            <person name="Takagi T."/>
            <person name="Takahashi H."/>
            <person name="Takemaru K."/>
            <person name="Takeuchi M."/>
            <person name="Tamakoshi A."/>
            <person name="Tanaka T."/>
            <person name="Terpstra P."/>
            <person name="Tognoni A."/>
            <person name="Tosato V."/>
            <person name="Uchiyama S."/>
            <person name="Vandenbol M."/>
            <person name="Vannier F."/>
            <person name="Vassarotti A."/>
            <person name="Viari A."/>
            <person name="Wambutt R."/>
            <person name="Wedler E."/>
            <person name="Wedler H."/>
            <person name="Weitzenegger T."/>
            <person name="Winters P."/>
            <person name="Wipat A."/>
            <person name="Yamamoto H."/>
            <person name="Yamane K."/>
            <person name="Yasumoto K."/>
            <person name="Yata K."/>
            <person name="Yoshida K."/>
            <person name="Yoshikawa H.-F."/>
            <person name="Zumstein E."/>
            <person name="Yoshikawa H."/>
            <person name="Danchin A."/>
        </authorList>
    </citation>
    <scope>NUCLEOTIDE SEQUENCE [LARGE SCALE GENOMIC DNA]</scope>
    <source>
        <strain>168</strain>
    </source>
</reference>
<reference key="3">
    <citation type="journal article" date="2009" name="Microbiology">
        <title>From a consortium sequence to a unified sequence: the Bacillus subtilis 168 reference genome a decade later.</title>
        <authorList>
            <person name="Barbe V."/>
            <person name="Cruveiller S."/>
            <person name="Kunst F."/>
            <person name="Lenoble P."/>
            <person name="Meurice G."/>
            <person name="Sekowska A."/>
            <person name="Vallenet D."/>
            <person name="Wang T."/>
            <person name="Moszer I."/>
            <person name="Medigue C."/>
            <person name="Danchin A."/>
        </authorList>
    </citation>
    <scope>SEQUENCE REVISION TO C-TERMINUS</scope>
</reference>
<feature type="chain" id="PRO_0000360854" description="Probable membrane transporter protein YdhB">
    <location>
        <begin position="1"/>
        <end position="245"/>
    </location>
</feature>
<feature type="transmembrane region" description="Helical" evidence="1">
    <location>
        <begin position="1"/>
        <end position="21"/>
    </location>
</feature>
<feature type="transmembrane region" description="Helical" evidence="1">
    <location>
        <begin position="34"/>
        <end position="56"/>
    </location>
</feature>
<feature type="transmembrane region" description="Helical" evidence="1">
    <location>
        <begin position="71"/>
        <end position="91"/>
    </location>
</feature>
<feature type="transmembrane region" description="Helical" evidence="1">
    <location>
        <begin position="98"/>
        <end position="118"/>
    </location>
</feature>
<feature type="transmembrane region" description="Helical" evidence="1">
    <location>
        <begin position="137"/>
        <end position="157"/>
    </location>
</feature>
<feature type="transmembrane region" description="Helical" evidence="1">
    <location>
        <begin position="177"/>
        <end position="197"/>
    </location>
</feature>
<feature type="transmembrane region" description="Helical" evidence="1">
    <location>
        <begin position="199"/>
        <end position="219"/>
    </location>
</feature>
<feature type="transmembrane region" description="Helical" evidence="1">
    <location>
        <begin position="225"/>
        <end position="245"/>
    </location>
</feature>
<sequence>MLIILVMFLLGIILGFIGAGGAGFVIALLTLLFHIPIHTALGTSLAGMAFTSLSGAYSHYREGNIQMKIGLIVGGFAAVGSFFGAKLTSFIPADLLHYLTAGMLFLSAILILIRLFILKEKAQVNQSTLSTYTRAVILGIAAGVLSGTFGIGSAPFIQIGLMIMLNLSIRHSVGTTMLVIIPLAVGGGIGYITEGFVDYVLLVKVLVGTMCGAYVGAKFTNLMPKVVLKSAIFLTPAIAGLLLLF</sequence>
<comment type="subcellular location">
    <subcellularLocation>
        <location evidence="2">Cell membrane</location>
        <topology evidence="2">Multi-pass membrane protein</topology>
    </subcellularLocation>
</comment>
<comment type="similarity">
    <text evidence="2">Belongs to the 4-toluene sulfonate uptake permease (TSUP) (TC 2.A.102) family.</text>
</comment>
<comment type="sequence caution" evidence="2">
    <conflict type="frameshift">
        <sequence resource="EMBL-CDS" id="BAA19693"/>
    </conflict>
</comment>
<evidence type="ECO:0000255" key="1"/>
<evidence type="ECO:0000305" key="2"/>
<organism>
    <name type="scientific">Bacillus subtilis (strain 168)</name>
    <dbReference type="NCBI Taxonomy" id="224308"/>
    <lineage>
        <taxon>Bacteria</taxon>
        <taxon>Bacillati</taxon>
        <taxon>Bacillota</taxon>
        <taxon>Bacilli</taxon>
        <taxon>Bacillales</taxon>
        <taxon>Bacillaceae</taxon>
        <taxon>Bacillus</taxon>
    </lineage>
</organism>
<name>YDHB_BACSU</name>